<reference key="1">
    <citation type="journal article" date="2001" name="Genome Res.">
        <title>The complete genome sequence of the lactic acid bacterium Lactococcus lactis ssp. lactis IL1403.</title>
        <authorList>
            <person name="Bolotin A."/>
            <person name="Wincker P."/>
            <person name="Mauger S."/>
            <person name="Jaillon O."/>
            <person name="Malarme K."/>
            <person name="Weissenbach J."/>
            <person name="Ehrlich S.D."/>
            <person name="Sorokin A."/>
        </authorList>
    </citation>
    <scope>NUCLEOTIDE SEQUENCE [LARGE SCALE GENOMIC DNA]</scope>
    <source>
        <strain>IL1403</strain>
    </source>
</reference>
<comment type="subcellular location">
    <subcellularLocation>
        <location evidence="2">Cell membrane</location>
        <topology evidence="2">Multi-pass membrane protein</topology>
    </subcellularLocation>
</comment>
<comment type="similarity">
    <text evidence="2">Belongs to the UPF0177 family.</text>
</comment>
<name>YVDC_LACLA</name>
<organism>
    <name type="scientific">Lactococcus lactis subsp. lactis (strain IL1403)</name>
    <name type="common">Streptococcus lactis</name>
    <dbReference type="NCBI Taxonomy" id="272623"/>
    <lineage>
        <taxon>Bacteria</taxon>
        <taxon>Bacillati</taxon>
        <taxon>Bacillota</taxon>
        <taxon>Bacilli</taxon>
        <taxon>Lactobacillales</taxon>
        <taxon>Streptococcaceae</taxon>
        <taxon>Lactococcus</taxon>
    </lineage>
</organism>
<keyword id="KW-1003">Cell membrane</keyword>
<keyword id="KW-0472">Membrane</keyword>
<keyword id="KW-1185">Reference proteome</keyword>
<keyword id="KW-0812">Transmembrane</keyword>
<keyword id="KW-1133">Transmembrane helix</keyword>
<dbReference type="EMBL" id="AE005176">
    <property type="protein sequence ID" value="AAK06145.1"/>
    <property type="molecule type" value="Genomic_DNA"/>
</dbReference>
<dbReference type="PIR" id="G86880">
    <property type="entry name" value="G86880"/>
</dbReference>
<dbReference type="RefSeq" id="NP_268204.1">
    <property type="nucleotide sequence ID" value="NC_002662.1"/>
</dbReference>
<dbReference type="RefSeq" id="WP_004254455.1">
    <property type="nucleotide sequence ID" value="NC_002662.1"/>
</dbReference>
<dbReference type="PaxDb" id="272623-L116216"/>
<dbReference type="EnsemblBacteria" id="AAK06145">
    <property type="protein sequence ID" value="AAK06145"/>
    <property type="gene ID" value="L116216"/>
</dbReference>
<dbReference type="KEGG" id="lla:L116216"/>
<dbReference type="PATRIC" id="fig|272623.7.peg.2204"/>
<dbReference type="eggNOG" id="COG1266">
    <property type="taxonomic scope" value="Bacteria"/>
</dbReference>
<dbReference type="HOGENOM" id="CLU_1174218_0_0_9"/>
<dbReference type="OrthoDB" id="8607342at2"/>
<dbReference type="Proteomes" id="UP000002196">
    <property type="component" value="Chromosome"/>
</dbReference>
<dbReference type="GO" id="GO:0005886">
    <property type="term" value="C:plasma membrane"/>
    <property type="evidence" value="ECO:0007669"/>
    <property type="project" value="UniProtKB-SubCell"/>
</dbReference>
<dbReference type="GO" id="GO:0004175">
    <property type="term" value="F:endopeptidase activity"/>
    <property type="evidence" value="ECO:0007669"/>
    <property type="project" value="UniProtKB-ARBA"/>
</dbReference>
<dbReference type="GO" id="GO:0080120">
    <property type="term" value="P:CAAX-box protein maturation"/>
    <property type="evidence" value="ECO:0007669"/>
    <property type="project" value="UniProtKB-ARBA"/>
</dbReference>
<dbReference type="InterPro" id="IPR003675">
    <property type="entry name" value="Rce1/LyrA-like_dom"/>
</dbReference>
<dbReference type="Pfam" id="PF02517">
    <property type="entry name" value="Rce1-like"/>
    <property type="match status" value="1"/>
</dbReference>
<sequence length="261" mass="29871">MFNIEKLQSLAKYRWVIVIILALLFSALSVSIFHLPFLMTALVLSIVGLIFAYHKSVWLVLFILSNLPMLATTIFAYQHHFTTLDTVIFFIIFLLTIISSYLIARKADIIPKISWKYFPPLKIIIGFALLFLVSILTGIFAQIINQSPTTSNQDSLNELQKVIPIAVFATQTLAAGFLEELVYRVGIFEVIFKNQKYFAFLTALLLFAYMHGPTDLYSWLTYGLMSLVLTSLYAKYRNFYLNMSVHLLWNLFGLVIALVLK</sequence>
<protein>
    <recommendedName>
        <fullName>UPF0177 protein YvdC</fullName>
    </recommendedName>
</protein>
<proteinExistence type="inferred from homology"/>
<evidence type="ECO:0000255" key="1"/>
<evidence type="ECO:0000305" key="2"/>
<gene>
    <name type="primary">yvdC</name>
    <name type="ordered locus">LL2047</name>
    <name type="ORF">L116216</name>
</gene>
<feature type="chain" id="PRO_0000220580" description="UPF0177 protein YvdC">
    <location>
        <begin position="1"/>
        <end position="261"/>
    </location>
</feature>
<feature type="transmembrane region" description="Helical" evidence="1">
    <location>
        <begin position="15"/>
        <end position="35"/>
    </location>
</feature>
<feature type="transmembrane region" description="Helical" evidence="1">
    <location>
        <begin position="43"/>
        <end position="63"/>
    </location>
</feature>
<feature type="transmembrane region" description="Helical" evidence="1">
    <location>
        <begin position="84"/>
        <end position="104"/>
    </location>
</feature>
<feature type="transmembrane region" description="Helical" evidence="1">
    <location>
        <begin position="123"/>
        <end position="143"/>
    </location>
</feature>
<feature type="transmembrane region" description="Helical" evidence="1">
    <location>
        <begin position="197"/>
        <end position="217"/>
    </location>
</feature>
<feature type="transmembrane region" description="Helical" evidence="1">
    <location>
        <begin position="239"/>
        <end position="259"/>
    </location>
</feature>
<accession>Q9CE03</accession>